<sequence>MSGLTIFSDQQPEKPLWQSHNAEEIQQQLTAIGVRFERWQADCELGENPQPEAVIAAYQHEIDRLVAENGYKSWDVISMRPDNPQREALREKFLSEHTHGEDEVRFFVEGSGLFCLHLNEKVYQILCEKNDLLSVPADIPHWFDMGSAPNFTAIRVFDNPEGWIARSTGDNIADGYPRLA</sequence>
<gene>
    <name evidence="1" type="primary">mtnD</name>
    <name type="ordered locus">YPDSF_2880</name>
</gene>
<name>MTND_YERPP</name>
<reference key="1">
    <citation type="submission" date="2007-02" db="EMBL/GenBank/DDBJ databases">
        <title>Complete sequence of chromosome of Yersinia pestis Pestoides F.</title>
        <authorList>
            <consortium name="US DOE Joint Genome Institute"/>
            <person name="Copeland A."/>
            <person name="Lucas S."/>
            <person name="Lapidus A."/>
            <person name="Barry K."/>
            <person name="Detter J.C."/>
            <person name="Glavina del Rio T."/>
            <person name="Hammon N."/>
            <person name="Israni S."/>
            <person name="Dalin E."/>
            <person name="Tice H."/>
            <person name="Pitluck S."/>
            <person name="Di Bartolo G."/>
            <person name="Chain P."/>
            <person name="Malfatti S."/>
            <person name="Shin M."/>
            <person name="Vergez L."/>
            <person name="Schmutz J."/>
            <person name="Larimer F."/>
            <person name="Land M."/>
            <person name="Hauser L."/>
            <person name="Worsham P."/>
            <person name="Chu M."/>
            <person name="Bearden S."/>
            <person name="Garcia E."/>
            <person name="Richardson P."/>
        </authorList>
    </citation>
    <scope>NUCLEOTIDE SEQUENCE [LARGE SCALE GENOMIC DNA]</scope>
    <source>
        <strain>Pestoides F</strain>
    </source>
</reference>
<accession>A4TPN0</accession>
<proteinExistence type="inferred from homology"/>
<organism>
    <name type="scientific">Yersinia pestis (strain Pestoides F)</name>
    <dbReference type="NCBI Taxonomy" id="386656"/>
    <lineage>
        <taxon>Bacteria</taxon>
        <taxon>Pseudomonadati</taxon>
        <taxon>Pseudomonadota</taxon>
        <taxon>Gammaproteobacteria</taxon>
        <taxon>Enterobacterales</taxon>
        <taxon>Yersiniaceae</taxon>
        <taxon>Yersinia</taxon>
    </lineage>
</organism>
<comment type="function">
    <text evidence="1">Catalyzes 2 different reactions between oxygen and the acireductone 1,2-dihydroxy-3-keto-5-methylthiopentene (DHK-MTPene) depending upon the metal bound in the active site. Fe-containing acireductone dioxygenase (Fe-ARD) produces formate and 2-keto-4-methylthiobutyrate (KMTB), the alpha-ketoacid precursor of methionine in the methionine recycle pathway. Ni-containing acireductone dioxygenase (Ni-ARD) produces methylthiopropionate, carbon monoxide and formate, and does not lie on the methionine recycle pathway.</text>
</comment>
<comment type="catalytic activity">
    <reaction evidence="1">
        <text>1,2-dihydroxy-5-(methylsulfanyl)pent-1-en-3-one + O2 = 3-(methylsulfanyl)propanoate + CO + formate + 2 H(+)</text>
        <dbReference type="Rhea" id="RHEA:14161"/>
        <dbReference type="ChEBI" id="CHEBI:15378"/>
        <dbReference type="ChEBI" id="CHEBI:15379"/>
        <dbReference type="ChEBI" id="CHEBI:15740"/>
        <dbReference type="ChEBI" id="CHEBI:17245"/>
        <dbReference type="ChEBI" id="CHEBI:49016"/>
        <dbReference type="ChEBI" id="CHEBI:49252"/>
        <dbReference type="EC" id="1.13.11.53"/>
    </reaction>
</comment>
<comment type="catalytic activity">
    <reaction evidence="1">
        <text>1,2-dihydroxy-5-(methylsulfanyl)pent-1-en-3-one + O2 = 4-methylsulfanyl-2-oxobutanoate + formate + 2 H(+)</text>
        <dbReference type="Rhea" id="RHEA:24504"/>
        <dbReference type="ChEBI" id="CHEBI:15378"/>
        <dbReference type="ChEBI" id="CHEBI:15379"/>
        <dbReference type="ChEBI" id="CHEBI:15740"/>
        <dbReference type="ChEBI" id="CHEBI:16723"/>
        <dbReference type="ChEBI" id="CHEBI:49252"/>
        <dbReference type="EC" id="1.13.11.54"/>
    </reaction>
</comment>
<comment type="cofactor">
    <cofactor evidence="1">
        <name>Fe(2+)</name>
        <dbReference type="ChEBI" id="CHEBI:29033"/>
    </cofactor>
    <text evidence="1">Binds 1 Fe(2+) cation per monomer.</text>
</comment>
<comment type="cofactor">
    <cofactor evidence="1">
        <name>Ni(2+)</name>
        <dbReference type="ChEBI" id="CHEBI:49786"/>
    </cofactor>
    <text evidence="1">Binds 1 nickel ion per monomer.</text>
</comment>
<comment type="pathway">
    <text evidence="1">Amino-acid biosynthesis; L-methionine biosynthesis via salvage pathway; L-methionine from S-methyl-5-thio-alpha-D-ribose 1-phosphate: step 5/6.</text>
</comment>
<comment type="subunit">
    <text evidence="1">Monomer.</text>
</comment>
<comment type="similarity">
    <text evidence="1">Belongs to the acireductone dioxygenase (ARD) family.</text>
</comment>
<dbReference type="EC" id="1.13.11.54" evidence="1"/>
<dbReference type="EC" id="1.13.11.53" evidence="1"/>
<dbReference type="EMBL" id="CP000668">
    <property type="protein sequence ID" value="ABP41242.1"/>
    <property type="molecule type" value="Genomic_DNA"/>
</dbReference>
<dbReference type="RefSeq" id="WP_011191833.1">
    <property type="nucleotide sequence ID" value="NZ_CP009715.1"/>
</dbReference>
<dbReference type="SMR" id="A4TPN0"/>
<dbReference type="KEGG" id="ypp:YPDSF_2880"/>
<dbReference type="PATRIC" id="fig|386656.14.peg.144"/>
<dbReference type="UniPathway" id="UPA00904">
    <property type="reaction ID" value="UER00878"/>
</dbReference>
<dbReference type="GO" id="GO:0010308">
    <property type="term" value="F:acireductone dioxygenase (Ni2+-requiring) activity"/>
    <property type="evidence" value="ECO:0007669"/>
    <property type="project" value="UniProtKB-UniRule"/>
</dbReference>
<dbReference type="GO" id="GO:0010309">
    <property type="term" value="F:acireductone dioxygenase [iron(II)-requiring] activity"/>
    <property type="evidence" value="ECO:0007669"/>
    <property type="project" value="UniProtKB-UniRule"/>
</dbReference>
<dbReference type="GO" id="GO:0005506">
    <property type="term" value="F:iron ion binding"/>
    <property type="evidence" value="ECO:0007669"/>
    <property type="project" value="UniProtKB-UniRule"/>
</dbReference>
<dbReference type="GO" id="GO:0016151">
    <property type="term" value="F:nickel cation binding"/>
    <property type="evidence" value="ECO:0007669"/>
    <property type="project" value="UniProtKB-UniRule"/>
</dbReference>
<dbReference type="GO" id="GO:0019509">
    <property type="term" value="P:L-methionine salvage from methylthioadenosine"/>
    <property type="evidence" value="ECO:0007669"/>
    <property type="project" value="UniProtKB-UniRule"/>
</dbReference>
<dbReference type="GO" id="GO:0019284">
    <property type="term" value="P:L-methionine salvage from S-adenosylmethionine"/>
    <property type="evidence" value="ECO:0007669"/>
    <property type="project" value="InterPro"/>
</dbReference>
<dbReference type="CDD" id="cd02232">
    <property type="entry name" value="cupin_ARD"/>
    <property type="match status" value="1"/>
</dbReference>
<dbReference type="Gene3D" id="2.60.120.10">
    <property type="entry name" value="Jelly Rolls"/>
    <property type="match status" value="1"/>
</dbReference>
<dbReference type="HAMAP" id="MF_01682">
    <property type="entry name" value="Salvage_MtnD"/>
    <property type="match status" value="1"/>
</dbReference>
<dbReference type="InterPro" id="IPR004313">
    <property type="entry name" value="ARD"/>
</dbReference>
<dbReference type="InterPro" id="IPR023956">
    <property type="entry name" value="ARD_bac"/>
</dbReference>
<dbReference type="InterPro" id="IPR014710">
    <property type="entry name" value="RmlC-like_jellyroll"/>
</dbReference>
<dbReference type="InterPro" id="IPR011051">
    <property type="entry name" value="RmlC_Cupin_sf"/>
</dbReference>
<dbReference type="PANTHER" id="PTHR23418">
    <property type="entry name" value="ACIREDUCTONE DIOXYGENASE"/>
    <property type="match status" value="1"/>
</dbReference>
<dbReference type="PANTHER" id="PTHR23418:SF0">
    <property type="entry name" value="ACIREDUCTONE DIOXYGENASE"/>
    <property type="match status" value="1"/>
</dbReference>
<dbReference type="Pfam" id="PF03079">
    <property type="entry name" value="ARD"/>
    <property type="match status" value="1"/>
</dbReference>
<dbReference type="SUPFAM" id="SSF51182">
    <property type="entry name" value="RmlC-like cupins"/>
    <property type="match status" value="1"/>
</dbReference>
<keyword id="KW-0028">Amino-acid biosynthesis</keyword>
<keyword id="KW-0223">Dioxygenase</keyword>
<keyword id="KW-0408">Iron</keyword>
<keyword id="KW-0479">Metal-binding</keyword>
<keyword id="KW-0486">Methionine biosynthesis</keyword>
<keyword id="KW-0533">Nickel</keyword>
<keyword id="KW-0560">Oxidoreductase</keyword>
<evidence type="ECO:0000255" key="1">
    <source>
        <dbReference type="HAMAP-Rule" id="MF_01682"/>
    </source>
</evidence>
<feature type="chain" id="PRO_0000359259" description="Acireductone dioxygenase">
    <location>
        <begin position="1"/>
        <end position="180"/>
    </location>
</feature>
<feature type="binding site" evidence="1">
    <location>
        <position position="97"/>
    </location>
    <ligand>
        <name>Fe(2+)</name>
        <dbReference type="ChEBI" id="CHEBI:29033"/>
    </ligand>
</feature>
<feature type="binding site" evidence="1">
    <location>
        <position position="97"/>
    </location>
    <ligand>
        <name>Ni(2+)</name>
        <dbReference type="ChEBI" id="CHEBI:49786"/>
    </ligand>
</feature>
<feature type="binding site" evidence="1">
    <location>
        <position position="99"/>
    </location>
    <ligand>
        <name>Fe(2+)</name>
        <dbReference type="ChEBI" id="CHEBI:29033"/>
    </ligand>
</feature>
<feature type="binding site" evidence="1">
    <location>
        <position position="99"/>
    </location>
    <ligand>
        <name>Ni(2+)</name>
        <dbReference type="ChEBI" id="CHEBI:49786"/>
    </ligand>
</feature>
<feature type="binding site" evidence="1">
    <location>
        <position position="103"/>
    </location>
    <ligand>
        <name>Fe(2+)</name>
        <dbReference type="ChEBI" id="CHEBI:29033"/>
    </ligand>
</feature>
<feature type="binding site" evidence="1">
    <location>
        <position position="103"/>
    </location>
    <ligand>
        <name>Ni(2+)</name>
        <dbReference type="ChEBI" id="CHEBI:49786"/>
    </ligand>
</feature>
<feature type="binding site" evidence="1">
    <location>
        <position position="141"/>
    </location>
    <ligand>
        <name>Fe(2+)</name>
        <dbReference type="ChEBI" id="CHEBI:29033"/>
    </ligand>
</feature>
<feature type="binding site" evidence="1">
    <location>
        <position position="141"/>
    </location>
    <ligand>
        <name>Ni(2+)</name>
        <dbReference type="ChEBI" id="CHEBI:49786"/>
    </ligand>
</feature>
<feature type="site" description="May play a role in metal incorporation in vivo" evidence="1">
    <location>
        <position position="96"/>
    </location>
</feature>
<feature type="site" description="May play a role in transmitting local conformational changes" evidence="1">
    <location>
        <position position="102"/>
    </location>
</feature>
<feature type="site" description="Important to generate the dianion" evidence="1">
    <location>
        <position position="105"/>
    </location>
</feature>
<protein>
    <recommendedName>
        <fullName evidence="1">Acireductone dioxygenase</fullName>
    </recommendedName>
    <alternativeName>
        <fullName evidence="1">1,2-dihydroxy-3-keto-5-methylthiopentene dioxygenase</fullName>
        <shortName evidence="1">DHK-MTPene dioxygenase</shortName>
    </alternativeName>
    <alternativeName>
        <fullName evidence="1">Acireductone dioxygenase (Fe(2+)-requiring)</fullName>
        <shortName evidence="1">ARD'</shortName>
        <shortName evidence="1">Fe-ARD</shortName>
        <ecNumber evidence="1">1.13.11.54</ecNumber>
    </alternativeName>
    <alternativeName>
        <fullName evidence="1">Acireductone dioxygenase (Ni(2+)-requiring)</fullName>
        <shortName evidence="1">ARD</shortName>
        <shortName evidence="1">Ni-ARD</shortName>
        <ecNumber evidence="1">1.13.11.53</ecNumber>
    </alternativeName>
</protein>